<name>RNH1_YEAST</name>
<proteinExistence type="evidence at protein level"/>
<gene>
    <name type="primary">RNH1</name>
    <name type="ordered locus">YMR234W</name>
    <name type="ORF">YM9959.16</name>
</gene>
<sequence>MARQGNFYAVRKGRETGIYNTWNECKNQVDGYGGAIYKKFNSYEQAKSFLGQPNTTSNYGSSTHAGGQVSKPHTTQKRVHRRNRPLHYSSLTSSSACSSLSSANTNTFYSVKSNVPNIESKIFNNWKDCQAYVKHKRGITFKKFEDQLAAENFISGMSAHDYKLMNISKESFESKYKLSSNTMYNKSMNVYCDGSSFGNGTSSSRAGYGAYFEGAPEENISEPLLSGAQTNNRAEIEAVSEALKKIWEKLTNEKEKVNYQIKTDSEYVTKLLNDRYMTYDNKKLEGLPNSDLIVPLVQRFVKVKKYYELNKECFKNNGKFQIEWVKGHDGDPGNEMADFLAKKGASRR</sequence>
<feature type="chain" id="PRO_0000195438" description="Ribonuclease H">
    <location>
        <begin position="1"/>
        <end position="348"/>
    </location>
</feature>
<feature type="domain" description="RNase H type-1" evidence="2">
    <location>
        <begin position="184"/>
        <end position="346"/>
    </location>
</feature>
<feature type="region of interest" description="Disordered" evidence="3">
    <location>
        <begin position="54"/>
        <end position="81"/>
    </location>
</feature>
<feature type="compositionally biased region" description="Polar residues" evidence="3">
    <location>
        <begin position="54"/>
        <end position="65"/>
    </location>
</feature>
<feature type="binding site" evidence="2">
    <location>
        <position position="193"/>
    </location>
    <ligand>
        <name>Mg(2+)</name>
        <dbReference type="ChEBI" id="CHEBI:18420"/>
        <label>1</label>
    </ligand>
</feature>
<feature type="binding site" evidence="2">
    <location>
        <position position="193"/>
    </location>
    <ligand>
        <name>Mg(2+)</name>
        <dbReference type="ChEBI" id="CHEBI:18420"/>
        <label>2</label>
    </ligand>
</feature>
<feature type="binding site" evidence="2">
    <location>
        <position position="235"/>
    </location>
    <ligand>
        <name>Mg(2+)</name>
        <dbReference type="ChEBI" id="CHEBI:18420"/>
        <label>1</label>
    </ligand>
</feature>
<feature type="binding site" evidence="2">
    <location>
        <position position="264"/>
    </location>
    <ligand>
        <name>Mg(2+)</name>
        <dbReference type="ChEBI" id="CHEBI:18420"/>
        <label>1</label>
    </ligand>
</feature>
<feature type="binding site" evidence="2">
    <location>
        <position position="338"/>
    </location>
    <ligand>
        <name>Mg(2+)</name>
        <dbReference type="ChEBI" id="CHEBI:18420"/>
        <label>2</label>
    </ligand>
</feature>
<feature type="strand" evidence="6">
    <location>
        <begin position="6"/>
        <end position="10"/>
    </location>
</feature>
<feature type="strand" evidence="6">
    <location>
        <begin position="12"/>
        <end position="15"/>
    </location>
</feature>
<feature type="strand" evidence="6">
    <location>
        <begin position="17"/>
        <end position="21"/>
    </location>
</feature>
<feature type="helix" evidence="6">
    <location>
        <begin position="22"/>
        <end position="28"/>
    </location>
</feature>
<feature type="strand" evidence="6">
    <location>
        <begin position="29"/>
        <end position="31"/>
    </location>
</feature>
<feature type="strand" evidence="6">
    <location>
        <begin position="38"/>
        <end position="41"/>
    </location>
</feature>
<feature type="helix" evidence="6">
    <location>
        <begin position="43"/>
        <end position="50"/>
    </location>
</feature>
<keyword id="KW-0002">3D-structure</keyword>
<keyword id="KW-0255">Endonuclease</keyword>
<keyword id="KW-0378">Hydrolase</keyword>
<keyword id="KW-0460">Magnesium</keyword>
<keyword id="KW-0479">Metal-binding</keyword>
<keyword id="KW-0540">Nuclease</keyword>
<keyword id="KW-1185">Reference proteome</keyword>
<accession>Q04740</accession>
<accession>D6W060</accession>
<reference key="1">
    <citation type="journal article" date="1997" name="Nature">
        <title>The nucleotide sequence of Saccharomyces cerevisiae chromosome XIII.</title>
        <authorList>
            <person name="Bowman S."/>
            <person name="Churcher C.M."/>
            <person name="Badcock K."/>
            <person name="Brown D."/>
            <person name="Chillingworth T."/>
            <person name="Connor R."/>
            <person name="Dedman K."/>
            <person name="Devlin K."/>
            <person name="Gentles S."/>
            <person name="Hamlin N."/>
            <person name="Hunt S."/>
            <person name="Jagels K."/>
            <person name="Lye G."/>
            <person name="Moule S."/>
            <person name="Odell C."/>
            <person name="Pearson D."/>
            <person name="Rajandream M.A."/>
            <person name="Rice P."/>
            <person name="Skelton J."/>
            <person name="Walsh S.V."/>
            <person name="Whitehead S."/>
            <person name="Barrell B.G."/>
        </authorList>
    </citation>
    <scope>NUCLEOTIDE SEQUENCE [LARGE SCALE GENOMIC DNA]</scope>
    <source>
        <strain>ATCC 204508 / S288c</strain>
    </source>
</reference>
<reference key="2">
    <citation type="journal article" date="2014" name="G3 (Bethesda)">
        <title>The reference genome sequence of Saccharomyces cerevisiae: Then and now.</title>
        <authorList>
            <person name="Engel S.R."/>
            <person name="Dietrich F.S."/>
            <person name="Fisk D.G."/>
            <person name="Binkley G."/>
            <person name="Balakrishnan R."/>
            <person name="Costanzo M.C."/>
            <person name="Dwight S.S."/>
            <person name="Hitz B.C."/>
            <person name="Karra K."/>
            <person name="Nash R.S."/>
            <person name="Weng S."/>
            <person name="Wong E.D."/>
            <person name="Lloyd P."/>
            <person name="Skrzypek M.S."/>
            <person name="Miyasato S.R."/>
            <person name="Simison M."/>
            <person name="Cherry J.M."/>
        </authorList>
    </citation>
    <scope>GENOME REANNOTATION</scope>
    <source>
        <strain>ATCC 204508 / S288c</strain>
    </source>
</reference>
<reference key="3">
    <citation type="journal article" date="1991" name="Mol. Gen. Genet.">
        <title>Selective cloning of genes encoding RNase H from Salmonella typhimurium, Saccharomyces cerevisiae and Escherichia coli rnh mutant.</title>
        <authorList>
            <person name="Itaya M."/>
            <person name="McKelvin D."/>
            <person name="Chatterjie S.K."/>
            <person name="Crouch R.J."/>
        </authorList>
    </citation>
    <scope>NUCLEOTIDE SEQUENCE [GENOMIC DNA] OF 157-348</scope>
    <source>
        <strain>ATCC 204510 / AB320</strain>
    </source>
</reference>
<reference key="4">
    <citation type="journal article" date="2003" name="Nature">
        <title>Global analysis of protein expression in yeast.</title>
        <authorList>
            <person name="Ghaemmaghami S."/>
            <person name="Huh W.-K."/>
            <person name="Bower K."/>
            <person name="Howson R.W."/>
            <person name="Belle A."/>
            <person name="Dephoure N."/>
            <person name="O'Shea E.K."/>
            <person name="Weissman J.S."/>
        </authorList>
    </citation>
    <scope>LEVEL OF PROTEIN EXPRESSION [LARGE SCALE ANALYSIS]</scope>
</reference>
<reference key="5">
    <citation type="journal article" date="1999" name="J. Mol. Biol.">
        <title>NMR structure of the N-terminal domain of Saccharomyces cerevisiae RNase HI reveals a fold with a strong resemblance to the N-terminal domain of ribosomal protein L9.</title>
        <authorList>
            <person name="Evans S.P."/>
            <person name="Bycroft M."/>
        </authorList>
    </citation>
    <scope>STRUCTURE BY NMR OF 6-52</scope>
</reference>
<organism>
    <name type="scientific">Saccharomyces cerevisiae (strain ATCC 204508 / S288c)</name>
    <name type="common">Baker's yeast</name>
    <dbReference type="NCBI Taxonomy" id="559292"/>
    <lineage>
        <taxon>Eukaryota</taxon>
        <taxon>Fungi</taxon>
        <taxon>Dikarya</taxon>
        <taxon>Ascomycota</taxon>
        <taxon>Saccharomycotina</taxon>
        <taxon>Saccharomycetes</taxon>
        <taxon>Saccharomycetales</taxon>
        <taxon>Saccharomycetaceae</taxon>
        <taxon>Saccharomyces</taxon>
    </lineage>
</organism>
<comment type="function">
    <text>Endonuclease that specifically degrades the RNA of RNA-DNA hybrids.</text>
</comment>
<comment type="catalytic activity">
    <reaction evidence="2">
        <text>Endonucleolytic cleavage to 5'-phosphomonoester.</text>
        <dbReference type="EC" id="3.1.26.4"/>
    </reaction>
</comment>
<comment type="cofactor">
    <cofactor evidence="1">
        <name>Mg(2+)</name>
        <dbReference type="ChEBI" id="CHEBI:18420"/>
    </cofactor>
    <text evidence="1">Binds 1 Mg(2+) ion per subunit. May bind a second metal ion at a regulatory site, or after substrate binding.</text>
</comment>
<comment type="miscellaneous">
    <text evidence="4">Present with 149 molecules/cell in log phase SD medium.</text>
</comment>
<comment type="similarity">
    <text evidence="5">Belongs to the RNase H family.</text>
</comment>
<protein>
    <recommendedName>
        <fullName>Ribonuclease H</fullName>
        <shortName>RNase H</shortName>
        <ecNumber>3.1.26.4</ecNumber>
    </recommendedName>
</protein>
<evidence type="ECO:0000250" key="1"/>
<evidence type="ECO:0000255" key="2">
    <source>
        <dbReference type="PROSITE-ProRule" id="PRU00408"/>
    </source>
</evidence>
<evidence type="ECO:0000256" key="3">
    <source>
        <dbReference type="SAM" id="MobiDB-lite"/>
    </source>
</evidence>
<evidence type="ECO:0000269" key="4">
    <source>
    </source>
</evidence>
<evidence type="ECO:0000305" key="5"/>
<evidence type="ECO:0007829" key="6">
    <source>
        <dbReference type="PDB" id="1QHK"/>
    </source>
</evidence>
<dbReference type="EC" id="3.1.26.4"/>
<dbReference type="EMBL" id="Z49939">
    <property type="protein sequence ID" value="CAA90205.1"/>
    <property type="molecule type" value="Genomic_DNA"/>
</dbReference>
<dbReference type="EMBL" id="X57160">
    <property type="protein sequence ID" value="CAA40448.1"/>
    <property type="molecule type" value="Genomic_DNA"/>
</dbReference>
<dbReference type="EMBL" id="BK006946">
    <property type="protein sequence ID" value="DAA10134.1"/>
    <property type="molecule type" value="Genomic_DNA"/>
</dbReference>
<dbReference type="PIR" id="S57601">
    <property type="entry name" value="S57601"/>
</dbReference>
<dbReference type="RefSeq" id="NP_013961.1">
    <property type="nucleotide sequence ID" value="NM_001182741.1"/>
</dbReference>
<dbReference type="PDB" id="1QHK">
    <property type="method" value="NMR"/>
    <property type="chains" value="A=5-51"/>
</dbReference>
<dbReference type="PDBsum" id="1QHK"/>
<dbReference type="BMRB" id="Q04740"/>
<dbReference type="SMR" id="Q04740"/>
<dbReference type="BioGRID" id="35412">
    <property type="interactions" value="130"/>
</dbReference>
<dbReference type="DIP" id="DIP-6787N"/>
<dbReference type="FunCoup" id="Q04740">
    <property type="interactions" value="294"/>
</dbReference>
<dbReference type="IntAct" id="Q04740">
    <property type="interactions" value="5"/>
</dbReference>
<dbReference type="STRING" id="4932.YMR234W"/>
<dbReference type="PaxDb" id="4932-YMR234W"/>
<dbReference type="PeptideAtlas" id="Q04740"/>
<dbReference type="EnsemblFungi" id="YMR234W_mRNA">
    <property type="protein sequence ID" value="YMR234W"/>
    <property type="gene ID" value="YMR234W"/>
</dbReference>
<dbReference type="GeneID" id="855274"/>
<dbReference type="KEGG" id="sce:YMR234W"/>
<dbReference type="AGR" id="SGD:S000004847"/>
<dbReference type="SGD" id="S000004847">
    <property type="gene designation" value="RNH1"/>
</dbReference>
<dbReference type="VEuPathDB" id="FungiDB:YMR234W"/>
<dbReference type="eggNOG" id="KOG3752">
    <property type="taxonomic scope" value="Eukaryota"/>
</dbReference>
<dbReference type="GeneTree" id="ENSGT00390000003466"/>
<dbReference type="HOGENOM" id="CLU_030894_0_0_1"/>
<dbReference type="InParanoid" id="Q04740"/>
<dbReference type="OMA" id="ELWYGLY"/>
<dbReference type="OrthoDB" id="407198at2759"/>
<dbReference type="BioCyc" id="YEAST:G3O-32915-MONOMER"/>
<dbReference type="BRENDA" id="3.1.26.4">
    <property type="organism ID" value="984"/>
</dbReference>
<dbReference type="BioGRID-ORCS" id="855274">
    <property type="hits" value="0 hits in 10 CRISPR screens"/>
</dbReference>
<dbReference type="EvolutionaryTrace" id="Q04740"/>
<dbReference type="PRO" id="PR:Q04740"/>
<dbReference type="Proteomes" id="UP000002311">
    <property type="component" value="Chromosome XIII"/>
</dbReference>
<dbReference type="RNAct" id="Q04740">
    <property type="molecule type" value="protein"/>
</dbReference>
<dbReference type="GO" id="GO:0005737">
    <property type="term" value="C:cytoplasm"/>
    <property type="evidence" value="ECO:0007005"/>
    <property type="project" value="SGD"/>
</dbReference>
<dbReference type="GO" id="GO:0005634">
    <property type="term" value="C:nucleus"/>
    <property type="evidence" value="ECO:0007005"/>
    <property type="project" value="SGD"/>
</dbReference>
<dbReference type="GO" id="GO:0000287">
    <property type="term" value="F:magnesium ion binding"/>
    <property type="evidence" value="ECO:0007669"/>
    <property type="project" value="InterPro"/>
</dbReference>
<dbReference type="GO" id="GO:0003676">
    <property type="term" value="F:nucleic acid binding"/>
    <property type="evidence" value="ECO:0007669"/>
    <property type="project" value="InterPro"/>
</dbReference>
<dbReference type="GO" id="GO:0004523">
    <property type="term" value="F:RNA-DNA hybrid ribonuclease activity"/>
    <property type="evidence" value="ECO:0000314"/>
    <property type="project" value="SGD"/>
</dbReference>
<dbReference type="GO" id="GO:0043137">
    <property type="term" value="P:DNA replication, removal of RNA primer"/>
    <property type="evidence" value="ECO:0000318"/>
    <property type="project" value="GO_Central"/>
</dbReference>
<dbReference type="GO" id="GO:0006401">
    <property type="term" value="P:RNA catabolic process"/>
    <property type="evidence" value="ECO:0000314"/>
    <property type="project" value="SGD"/>
</dbReference>
<dbReference type="CDD" id="cd09280">
    <property type="entry name" value="RNase_HI_eukaryote_like"/>
    <property type="match status" value="1"/>
</dbReference>
<dbReference type="FunFam" id="3.30.420.10:FF:000090">
    <property type="entry name" value="Ribonuclease H"/>
    <property type="match status" value="1"/>
</dbReference>
<dbReference type="FunFam" id="3.40.970.10:FF:000001">
    <property type="entry name" value="Ribonuclease H1"/>
    <property type="match status" value="1"/>
</dbReference>
<dbReference type="Gene3D" id="3.30.420.10">
    <property type="entry name" value="Ribonuclease H-like superfamily/Ribonuclease H"/>
    <property type="match status" value="1"/>
</dbReference>
<dbReference type="Gene3D" id="3.40.970.10">
    <property type="entry name" value="Ribonuclease H1, N-terminal domain"/>
    <property type="match status" value="2"/>
</dbReference>
<dbReference type="InterPro" id="IPR009027">
    <property type="entry name" value="Ribosomal_bL9/RNase_H1_N"/>
</dbReference>
<dbReference type="InterPro" id="IPR050092">
    <property type="entry name" value="RNase_H"/>
</dbReference>
<dbReference type="InterPro" id="IPR017067">
    <property type="entry name" value="RNase_H1_euk"/>
</dbReference>
<dbReference type="InterPro" id="IPR011320">
    <property type="entry name" value="RNase_H1_N"/>
</dbReference>
<dbReference type="InterPro" id="IPR037056">
    <property type="entry name" value="RNase_H1_N_sf"/>
</dbReference>
<dbReference type="InterPro" id="IPR012337">
    <property type="entry name" value="RNaseH-like_sf"/>
</dbReference>
<dbReference type="InterPro" id="IPR002156">
    <property type="entry name" value="RNaseH_domain"/>
</dbReference>
<dbReference type="InterPro" id="IPR036397">
    <property type="entry name" value="RNaseH_sf"/>
</dbReference>
<dbReference type="PANTHER" id="PTHR10642">
    <property type="entry name" value="RIBONUCLEASE H1"/>
    <property type="match status" value="1"/>
</dbReference>
<dbReference type="PANTHER" id="PTHR10642:SF26">
    <property type="entry name" value="RIBONUCLEASE H1"/>
    <property type="match status" value="1"/>
</dbReference>
<dbReference type="Pfam" id="PF01693">
    <property type="entry name" value="Cauli_VI"/>
    <property type="match status" value="2"/>
</dbReference>
<dbReference type="Pfam" id="PF00075">
    <property type="entry name" value="RNase_H"/>
    <property type="match status" value="1"/>
</dbReference>
<dbReference type="PIRSF" id="PIRSF036852">
    <property type="entry name" value="Ribonuclease_H1_euk"/>
    <property type="match status" value="1"/>
</dbReference>
<dbReference type="SUPFAM" id="SSF55658">
    <property type="entry name" value="L9 N-domain-like"/>
    <property type="match status" value="2"/>
</dbReference>
<dbReference type="SUPFAM" id="SSF53098">
    <property type="entry name" value="Ribonuclease H-like"/>
    <property type="match status" value="1"/>
</dbReference>
<dbReference type="PROSITE" id="PS50879">
    <property type="entry name" value="RNASE_H_1"/>
    <property type="match status" value="1"/>
</dbReference>